<evidence type="ECO:0000255" key="1">
    <source>
        <dbReference type="HAMAP-Rule" id="MF_00167"/>
    </source>
</evidence>
<comment type="function">
    <text evidence="1">A translational regulator that binds mRNA to regulate translation initiation and/or mRNA stability. Usually binds in the 5'-UTR at or near the Shine-Dalgarno sequence preventing ribosome-binding, thus repressing translation. Its main target seems to be the major flagellin gene, while its function is anatagonized by FliW.</text>
</comment>
<comment type="subunit">
    <text evidence="1">Homodimer; the beta-strands of each monomer intercalate to form a hydrophobic core, while the alpha-helices form wings that extend away from the core.</text>
</comment>
<comment type="subcellular location">
    <subcellularLocation>
        <location evidence="1">Cytoplasm</location>
    </subcellularLocation>
</comment>
<comment type="similarity">
    <text evidence="1">Belongs to the CsrA/RsmA family.</text>
</comment>
<organism>
    <name type="scientific">Ruminiclostridium cellulolyticum (strain ATCC 35319 / DSM 5812 / JCM 6584 / H10)</name>
    <name type="common">Clostridium cellulolyticum</name>
    <dbReference type="NCBI Taxonomy" id="394503"/>
    <lineage>
        <taxon>Bacteria</taxon>
        <taxon>Bacillati</taxon>
        <taxon>Bacillota</taxon>
        <taxon>Clostridia</taxon>
        <taxon>Eubacteriales</taxon>
        <taxon>Oscillospiraceae</taxon>
        <taxon>Ruminiclostridium</taxon>
    </lineage>
</organism>
<reference key="1">
    <citation type="submission" date="2009-01" db="EMBL/GenBank/DDBJ databases">
        <title>Complete sequence of Clostridium cellulolyticum H10.</title>
        <authorList>
            <consortium name="US DOE Joint Genome Institute"/>
            <person name="Lucas S."/>
            <person name="Copeland A."/>
            <person name="Lapidus A."/>
            <person name="Glavina del Rio T."/>
            <person name="Dalin E."/>
            <person name="Tice H."/>
            <person name="Bruce D."/>
            <person name="Goodwin L."/>
            <person name="Pitluck S."/>
            <person name="Chertkov O."/>
            <person name="Saunders E."/>
            <person name="Brettin T."/>
            <person name="Detter J.C."/>
            <person name="Han C."/>
            <person name="Larimer F."/>
            <person name="Land M."/>
            <person name="Hauser L."/>
            <person name="Kyrpides N."/>
            <person name="Ivanova N."/>
            <person name="Zhou J."/>
            <person name="Richardson P."/>
        </authorList>
    </citation>
    <scope>NUCLEOTIDE SEQUENCE [LARGE SCALE GENOMIC DNA]</scope>
    <source>
        <strain>ATCC 35319 / DSM 5812 / JCM 6584 / H10</strain>
    </source>
</reference>
<proteinExistence type="inferred from homology"/>
<accession>B8I4D3</accession>
<feature type="chain" id="PRO_1000123621" description="Translational regulator CsrA">
    <location>
        <begin position="1"/>
        <end position="72"/>
    </location>
</feature>
<name>CSRA_RUMCH</name>
<gene>
    <name evidence="1" type="primary">csrA</name>
    <name type="ordered locus">Ccel_0099</name>
</gene>
<protein>
    <recommendedName>
        <fullName evidence="1">Translational regulator CsrA</fullName>
    </recommendedName>
</protein>
<sequence length="72" mass="8191">MLVLSRKKDQSLMIGNDIELTIIDIQGDQVKIGLKAPKNVSIYRKELYLEIQEENKKAATADVVELDSIFKK</sequence>
<dbReference type="EMBL" id="CP001348">
    <property type="protein sequence ID" value="ACL74487.1"/>
    <property type="molecule type" value="Genomic_DNA"/>
</dbReference>
<dbReference type="RefSeq" id="WP_012634553.1">
    <property type="nucleotide sequence ID" value="NC_011898.1"/>
</dbReference>
<dbReference type="SMR" id="B8I4D3"/>
<dbReference type="STRING" id="394503.Ccel_0099"/>
<dbReference type="KEGG" id="cce:Ccel_0099"/>
<dbReference type="eggNOG" id="COG1551">
    <property type="taxonomic scope" value="Bacteria"/>
</dbReference>
<dbReference type="HOGENOM" id="CLU_164837_0_0_9"/>
<dbReference type="OrthoDB" id="9809061at2"/>
<dbReference type="Proteomes" id="UP000001349">
    <property type="component" value="Chromosome"/>
</dbReference>
<dbReference type="GO" id="GO:0005829">
    <property type="term" value="C:cytosol"/>
    <property type="evidence" value="ECO:0007669"/>
    <property type="project" value="TreeGrafter"/>
</dbReference>
<dbReference type="GO" id="GO:0048027">
    <property type="term" value="F:mRNA 5'-UTR binding"/>
    <property type="evidence" value="ECO:0007669"/>
    <property type="project" value="UniProtKB-UniRule"/>
</dbReference>
<dbReference type="GO" id="GO:0044781">
    <property type="term" value="P:bacterial-type flagellum organization"/>
    <property type="evidence" value="ECO:0007669"/>
    <property type="project" value="UniProtKB-KW"/>
</dbReference>
<dbReference type="GO" id="GO:0006402">
    <property type="term" value="P:mRNA catabolic process"/>
    <property type="evidence" value="ECO:0007669"/>
    <property type="project" value="InterPro"/>
</dbReference>
<dbReference type="GO" id="GO:0045947">
    <property type="term" value="P:negative regulation of translational initiation"/>
    <property type="evidence" value="ECO:0007669"/>
    <property type="project" value="UniProtKB-UniRule"/>
</dbReference>
<dbReference type="GO" id="GO:1902208">
    <property type="term" value="P:regulation of bacterial-type flagellum assembly"/>
    <property type="evidence" value="ECO:0007669"/>
    <property type="project" value="UniProtKB-UniRule"/>
</dbReference>
<dbReference type="GO" id="GO:0006109">
    <property type="term" value="P:regulation of carbohydrate metabolic process"/>
    <property type="evidence" value="ECO:0007669"/>
    <property type="project" value="InterPro"/>
</dbReference>
<dbReference type="FunFam" id="2.60.40.4380:FF:000002">
    <property type="entry name" value="Translational regulator CsrA"/>
    <property type="match status" value="1"/>
</dbReference>
<dbReference type="Gene3D" id="2.60.40.4380">
    <property type="entry name" value="Translational regulator CsrA"/>
    <property type="match status" value="1"/>
</dbReference>
<dbReference type="HAMAP" id="MF_00167">
    <property type="entry name" value="CsrA"/>
    <property type="match status" value="1"/>
</dbReference>
<dbReference type="InterPro" id="IPR003751">
    <property type="entry name" value="CsrA"/>
</dbReference>
<dbReference type="InterPro" id="IPR036107">
    <property type="entry name" value="CsrA_sf"/>
</dbReference>
<dbReference type="NCBIfam" id="TIGR00202">
    <property type="entry name" value="csrA"/>
    <property type="match status" value="1"/>
</dbReference>
<dbReference type="NCBIfam" id="NF002469">
    <property type="entry name" value="PRK01712.1"/>
    <property type="match status" value="1"/>
</dbReference>
<dbReference type="PANTHER" id="PTHR34984">
    <property type="entry name" value="CARBON STORAGE REGULATOR"/>
    <property type="match status" value="1"/>
</dbReference>
<dbReference type="PANTHER" id="PTHR34984:SF1">
    <property type="entry name" value="CARBON STORAGE REGULATOR"/>
    <property type="match status" value="1"/>
</dbReference>
<dbReference type="Pfam" id="PF02599">
    <property type="entry name" value="CsrA"/>
    <property type="match status" value="1"/>
</dbReference>
<dbReference type="SUPFAM" id="SSF117130">
    <property type="entry name" value="CsrA-like"/>
    <property type="match status" value="1"/>
</dbReference>
<keyword id="KW-1005">Bacterial flagellum biogenesis</keyword>
<keyword id="KW-0963">Cytoplasm</keyword>
<keyword id="KW-1185">Reference proteome</keyword>
<keyword id="KW-0678">Repressor</keyword>
<keyword id="KW-0694">RNA-binding</keyword>
<keyword id="KW-0810">Translation regulation</keyword>